<feature type="chain" id="PRO_0000375490" description="Succinyl-diaminopimelate desuccinylase">
    <location>
        <begin position="1"/>
        <end position="395"/>
    </location>
</feature>
<feature type="active site" evidence="1">
    <location>
        <position position="76"/>
    </location>
</feature>
<feature type="active site" description="Proton acceptor" evidence="1">
    <location>
        <position position="141"/>
    </location>
</feature>
<feature type="binding site" evidence="1">
    <location>
        <position position="74"/>
    </location>
    <ligand>
        <name>Zn(2+)</name>
        <dbReference type="ChEBI" id="CHEBI:29105"/>
        <label>1</label>
    </ligand>
</feature>
<feature type="binding site" evidence="1">
    <location>
        <position position="107"/>
    </location>
    <ligand>
        <name>Zn(2+)</name>
        <dbReference type="ChEBI" id="CHEBI:29105"/>
        <label>1</label>
    </ligand>
</feature>
<feature type="binding site" evidence="1">
    <location>
        <position position="107"/>
    </location>
    <ligand>
        <name>Zn(2+)</name>
        <dbReference type="ChEBI" id="CHEBI:29105"/>
        <label>2</label>
    </ligand>
</feature>
<feature type="binding site" evidence="1">
    <location>
        <position position="142"/>
    </location>
    <ligand>
        <name>Zn(2+)</name>
        <dbReference type="ChEBI" id="CHEBI:29105"/>
        <label>2</label>
    </ligand>
</feature>
<feature type="binding site" evidence="1">
    <location>
        <position position="170"/>
    </location>
    <ligand>
        <name>Zn(2+)</name>
        <dbReference type="ChEBI" id="CHEBI:29105"/>
        <label>1</label>
    </ligand>
</feature>
<feature type="binding site" evidence="1">
    <location>
        <position position="368"/>
    </location>
    <ligand>
        <name>Zn(2+)</name>
        <dbReference type="ChEBI" id="CHEBI:29105"/>
        <label>2</label>
    </ligand>
</feature>
<evidence type="ECO:0000255" key="1">
    <source>
        <dbReference type="HAMAP-Rule" id="MF_01690"/>
    </source>
</evidence>
<proteinExistence type="inferred from homology"/>
<comment type="function">
    <text evidence="1">Catalyzes the hydrolysis of N-succinyl-L,L-diaminopimelic acid (SDAP), forming succinate and LL-2,6-diaminopimelate (DAP), an intermediate involved in the bacterial biosynthesis of lysine and meso-diaminopimelic acid, an essential component of bacterial cell walls.</text>
</comment>
<comment type="catalytic activity">
    <reaction evidence="1">
        <text>N-succinyl-(2S,6S)-2,6-diaminopimelate + H2O = (2S,6S)-2,6-diaminopimelate + succinate</text>
        <dbReference type="Rhea" id="RHEA:22608"/>
        <dbReference type="ChEBI" id="CHEBI:15377"/>
        <dbReference type="ChEBI" id="CHEBI:30031"/>
        <dbReference type="ChEBI" id="CHEBI:57609"/>
        <dbReference type="ChEBI" id="CHEBI:58087"/>
        <dbReference type="EC" id="3.5.1.18"/>
    </reaction>
</comment>
<comment type="cofactor">
    <cofactor evidence="1">
        <name>Zn(2+)</name>
        <dbReference type="ChEBI" id="CHEBI:29105"/>
    </cofactor>
    <cofactor evidence="1">
        <name>Co(2+)</name>
        <dbReference type="ChEBI" id="CHEBI:48828"/>
    </cofactor>
    <text evidence="1">Binds 2 Zn(2+) or Co(2+) ions per subunit.</text>
</comment>
<comment type="pathway">
    <text evidence="1">Amino-acid biosynthesis; L-lysine biosynthesis via DAP pathway; LL-2,6-diaminopimelate from (S)-tetrahydrodipicolinate (succinylase route): step 3/3.</text>
</comment>
<comment type="subunit">
    <text evidence="1">Homodimer.</text>
</comment>
<comment type="similarity">
    <text evidence="1">Belongs to the peptidase M20A family. DapE subfamily.</text>
</comment>
<protein>
    <recommendedName>
        <fullName evidence="1">Succinyl-diaminopimelate desuccinylase</fullName>
        <shortName evidence="1">SDAP desuccinylase</shortName>
        <ecNumber evidence="1">3.5.1.18</ecNumber>
    </recommendedName>
    <alternativeName>
        <fullName evidence="1">N-succinyl-LL-2,6-diaminoheptanedioate amidohydrolase</fullName>
    </alternativeName>
</protein>
<reference key="1">
    <citation type="journal article" date="2002" name="Proc. Natl. Acad. Sci. U.S.A.">
        <title>The Brucella suis genome reveals fundamental similarities between animal and plant pathogens and symbionts.</title>
        <authorList>
            <person name="Paulsen I.T."/>
            <person name="Seshadri R."/>
            <person name="Nelson K.E."/>
            <person name="Eisen J.A."/>
            <person name="Heidelberg J.F."/>
            <person name="Read T.D."/>
            <person name="Dodson R.J."/>
            <person name="Umayam L.A."/>
            <person name="Brinkac L.M."/>
            <person name="Beanan M.J."/>
            <person name="Daugherty S.C."/>
            <person name="DeBoy R.T."/>
            <person name="Durkin A.S."/>
            <person name="Kolonay J.F."/>
            <person name="Madupu R."/>
            <person name="Nelson W.C."/>
            <person name="Ayodeji B."/>
            <person name="Kraul M."/>
            <person name="Shetty J."/>
            <person name="Malek J.A."/>
            <person name="Van Aken S.E."/>
            <person name="Riedmuller S."/>
            <person name="Tettelin H."/>
            <person name="Gill S.R."/>
            <person name="White O."/>
            <person name="Salzberg S.L."/>
            <person name="Hoover D.L."/>
            <person name="Lindler L.E."/>
            <person name="Halling S.M."/>
            <person name="Boyle S.M."/>
            <person name="Fraser C.M."/>
        </authorList>
    </citation>
    <scope>NUCLEOTIDE SEQUENCE [LARGE SCALE GENOMIC DNA]</scope>
    <source>
        <strain>1330</strain>
    </source>
</reference>
<reference key="2">
    <citation type="journal article" date="2011" name="J. Bacteriol.">
        <title>Revised genome sequence of Brucella suis 1330.</title>
        <authorList>
            <person name="Tae H."/>
            <person name="Shallom S."/>
            <person name="Settlage R."/>
            <person name="Preston D."/>
            <person name="Adams L.G."/>
            <person name="Garner H.R."/>
        </authorList>
    </citation>
    <scope>NUCLEOTIDE SEQUENCE [LARGE SCALE GENOMIC DNA]</scope>
    <source>
        <strain>1330</strain>
    </source>
</reference>
<keyword id="KW-0028">Amino-acid biosynthesis</keyword>
<keyword id="KW-0170">Cobalt</keyword>
<keyword id="KW-0220">Diaminopimelate biosynthesis</keyword>
<keyword id="KW-0378">Hydrolase</keyword>
<keyword id="KW-0457">Lysine biosynthesis</keyword>
<keyword id="KW-0479">Metal-binding</keyword>
<keyword id="KW-0862">Zinc</keyword>
<name>DAPE_BRUSU</name>
<accession>Q8FV22</accession>
<accession>G0KE37</accession>
<dbReference type="EC" id="3.5.1.18" evidence="1"/>
<dbReference type="EMBL" id="AE014292">
    <property type="protein sequence ID" value="AAN34199.1"/>
    <property type="molecule type" value="Genomic_DNA"/>
</dbReference>
<dbReference type="EMBL" id="CP002998">
    <property type="protein sequence ID" value="AEM20475.1"/>
    <property type="molecule type" value="Genomic_DNA"/>
</dbReference>
<dbReference type="RefSeq" id="WP_004687037.1">
    <property type="nucleotide sequence ID" value="NZ_KN046805.1"/>
</dbReference>
<dbReference type="SMR" id="Q8FV22"/>
<dbReference type="GeneID" id="97534920"/>
<dbReference type="KEGG" id="bms:BRA1031"/>
<dbReference type="KEGG" id="bsi:BS1330_II1023"/>
<dbReference type="PATRIC" id="fig|204722.21.peg.1088"/>
<dbReference type="HOGENOM" id="CLU_021802_4_0_5"/>
<dbReference type="PhylomeDB" id="Q8FV22"/>
<dbReference type="UniPathway" id="UPA00034">
    <property type="reaction ID" value="UER00021"/>
</dbReference>
<dbReference type="Proteomes" id="UP000007104">
    <property type="component" value="Chromosome II"/>
</dbReference>
<dbReference type="GO" id="GO:0008777">
    <property type="term" value="F:acetylornithine deacetylase activity"/>
    <property type="evidence" value="ECO:0007669"/>
    <property type="project" value="TreeGrafter"/>
</dbReference>
<dbReference type="GO" id="GO:0050897">
    <property type="term" value="F:cobalt ion binding"/>
    <property type="evidence" value="ECO:0007669"/>
    <property type="project" value="UniProtKB-UniRule"/>
</dbReference>
<dbReference type="GO" id="GO:0009014">
    <property type="term" value="F:succinyl-diaminopimelate desuccinylase activity"/>
    <property type="evidence" value="ECO:0007669"/>
    <property type="project" value="UniProtKB-UniRule"/>
</dbReference>
<dbReference type="GO" id="GO:0008270">
    <property type="term" value="F:zinc ion binding"/>
    <property type="evidence" value="ECO:0007669"/>
    <property type="project" value="UniProtKB-UniRule"/>
</dbReference>
<dbReference type="GO" id="GO:0019877">
    <property type="term" value="P:diaminopimelate biosynthetic process"/>
    <property type="evidence" value="ECO:0007669"/>
    <property type="project" value="UniProtKB-UniRule"/>
</dbReference>
<dbReference type="GO" id="GO:0006526">
    <property type="term" value="P:L-arginine biosynthetic process"/>
    <property type="evidence" value="ECO:0007669"/>
    <property type="project" value="TreeGrafter"/>
</dbReference>
<dbReference type="GO" id="GO:0009089">
    <property type="term" value="P:lysine biosynthetic process via diaminopimelate"/>
    <property type="evidence" value="ECO:0007669"/>
    <property type="project" value="UniProtKB-UniRule"/>
</dbReference>
<dbReference type="CDD" id="cd03891">
    <property type="entry name" value="M20_DapE_proteobac"/>
    <property type="match status" value="1"/>
</dbReference>
<dbReference type="Gene3D" id="3.30.70.360">
    <property type="match status" value="1"/>
</dbReference>
<dbReference type="Gene3D" id="3.40.630.10">
    <property type="entry name" value="Zn peptidases"/>
    <property type="match status" value="2"/>
</dbReference>
<dbReference type="HAMAP" id="MF_01690">
    <property type="entry name" value="DapE"/>
    <property type="match status" value="1"/>
</dbReference>
<dbReference type="InterPro" id="IPR001261">
    <property type="entry name" value="ArgE/DapE_CS"/>
</dbReference>
<dbReference type="InterPro" id="IPR036264">
    <property type="entry name" value="Bact_exopeptidase_dim_dom"/>
</dbReference>
<dbReference type="InterPro" id="IPR005941">
    <property type="entry name" value="DapE_proteobac"/>
</dbReference>
<dbReference type="InterPro" id="IPR002933">
    <property type="entry name" value="Peptidase_M20"/>
</dbReference>
<dbReference type="InterPro" id="IPR011650">
    <property type="entry name" value="Peptidase_M20_dimer"/>
</dbReference>
<dbReference type="InterPro" id="IPR050072">
    <property type="entry name" value="Peptidase_M20A"/>
</dbReference>
<dbReference type="NCBIfam" id="TIGR01246">
    <property type="entry name" value="dapE_proteo"/>
    <property type="match status" value="1"/>
</dbReference>
<dbReference type="NCBIfam" id="NF009557">
    <property type="entry name" value="PRK13009.1"/>
    <property type="match status" value="1"/>
</dbReference>
<dbReference type="PANTHER" id="PTHR43808">
    <property type="entry name" value="ACETYLORNITHINE DEACETYLASE"/>
    <property type="match status" value="1"/>
</dbReference>
<dbReference type="PANTHER" id="PTHR43808:SF31">
    <property type="entry name" value="N-ACETYL-L-CITRULLINE DEACETYLASE"/>
    <property type="match status" value="1"/>
</dbReference>
<dbReference type="Pfam" id="PF07687">
    <property type="entry name" value="M20_dimer"/>
    <property type="match status" value="1"/>
</dbReference>
<dbReference type="Pfam" id="PF01546">
    <property type="entry name" value="Peptidase_M20"/>
    <property type="match status" value="1"/>
</dbReference>
<dbReference type="SUPFAM" id="SSF55031">
    <property type="entry name" value="Bacterial exopeptidase dimerisation domain"/>
    <property type="match status" value="1"/>
</dbReference>
<dbReference type="SUPFAM" id="SSF53187">
    <property type="entry name" value="Zn-dependent exopeptidases"/>
    <property type="match status" value="1"/>
</dbReference>
<dbReference type="PROSITE" id="PS00758">
    <property type="entry name" value="ARGE_DAPE_CPG2_1"/>
    <property type="match status" value="1"/>
</dbReference>
<dbReference type="PROSITE" id="PS00759">
    <property type="entry name" value="ARGE_DAPE_CPG2_2"/>
    <property type="match status" value="1"/>
</dbReference>
<gene>
    <name evidence="1" type="primary">dapE</name>
    <name type="ordered locus">BRA1031</name>
    <name type="ordered locus">BS1330_II1023</name>
</gene>
<organism>
    <name type="scientific">Brucella suis biovar 1 (strain 1330)</name>
    <dbReference type="NCBI Taxonomy" id="204722"/>
    <lineage>
        <taxon>Bacteria</taxon>
        <taxon>Pseudomonadati</taxon>
        <taxon>Pseudomonadota</taxon>
        <taxon>Alphaproteobacteria</taxon>
        <taxon>Hyphomicrobiales</taxon>
        <taxon>Brucellaceae</taxon>
        <taxon>Brucella/Ochrobactrum group</taxon>
        <taxon>Brucella</taxon>
    </lineage>
</organism>
<sequence length="395" mass="42809">MTLPVNPADNLAALIRCPSVTPAEGGALTALEKMLKLMGFSANRPVFSDDNTPDIENLYARKSGNGPHLMFAGHTDVVPPGDEKDWKHPPFAAAIEDGVMYGRGAVDMKGGIACFVAAVARHIEKHGNIKGSISFLITGDEEGPAVNGTVKLLEWAKQRGESWDASIVGEPTNPNALGDMIKIGRRGSLSGTITVHGVQGHAAYPHLAENPVRGIVTLVDSLLYPAFDEGTANFQASNLEVTTIDVGNKATNVIPNKATASFNIRFNDTWTAESLQAEIISRLERAARDNRLRQGRETPIKYELTWRERPSHVFLTHDEKLIGTLTASVEAVTGKRPELSTSGGTSDARFIKDYCPVVEFGLTGQTMHMVDERVALADLEGLTQIYERFIADFFG</sequence>